<reference key="1">
    <citation type="journal article" date="2005" name="Genome Res.">
        <title>Comparative genome sequencing of Drosophila pseudoobscura: chromosomal, gene, and cis-element evolution.</title>
        <authorList>
            <person name="Richards S."/>
            <person name="Liu Y."/>
            <person name="Bettencourt B.R."/>
            <person name="Hradecky P."/>
            <person name="Letovsky S."/>
            <person name="Nielsen R."/>
            <person name="Thornton K."/>
            <person name="Hubisz M.J."/>
            <person name="Chen R."/>
            <person name="Meisel R.P."/>
            <person name="Couronne O."/>
            <person name="Hua S."/>
            <person name="Smith M.A."/>
            <person name="Zhang P."/>
            <person name="Liu J."/>
            <person name="Bussemaker H.J."/>
            <person name="van Batenburg M.F."/>
            <person name="Howells S.L."/>
            <person name="Scherer S.E."/>
            <person name="Sodergren E."/>
            <person name="Matthews B.B."/>
            <person name="Crosby M.A."/>
            <person name="Schroeder A.J."/>
            <person name="Ortiz-Barrientos D."/>
            <person name="Rives C.M."/>
            <person name="Metzker M.L."/>
            <person name="Muzny D.M."/>
            <person name="Scott G."/>
            <person name="Steffen D."/>
            <person name="Wheeler D.A."/>
            <person name="Worley K.C."/>
            <person name="Havlak P."/>
            <person name="Durbin K.J."/>
            <person name="Egan A."/>
            <person name="Gill R."/>
            <person name="Hume J."/>
            <person name="Morgan M.B."/>
            <person name="Miner G."/>
            <person name="Hamilton C."/>
            <person name="Huang Y."/>
            <person name="Waldron L."/>
            <person name="Verduzco D."/>
            <person name="Clerc-Blankenburg K.P."/>
            <person name="Dubchak I."/>
            <person name="Noor M.A.F."/>
            <person name="Anderson W."/>
            <person name="White K.P."/>
            <person name="Clark A.G."/>
            <person name="Schaeffer S.W."/>
            <person name="Gelbart W.M."/>
            <person name="Weinstock G.M."/>
            <person name="Gibbs R.A."/>
        </authorList>
    </citation>
    <scope>NUCLEOTIDE SEQUENCE [LARGE SCALE GENOMIC DNA]</scope>
    <source>
        <strain>MV2-25 / Tucson 14011-0121.94</strain>
    </source>
</reference>
<accession>Q28ZC1</accession>
<proteinExistence type="inferred from homology"/>
<organism>
    <name type="scientific">Drosophila pseudoobscura pseudoobscura</name>
    <name type="common">Fruit fly</name>
    <dbReference type="NCBI Taxonomy" id="46245"/>
    <lineage>
        <taxon>Eukaryota</taxon>
        <taxon>Metazoa</taxon>
        <taxon>Ecdysozoa</taxon>
        <taxon>Arthropoda</taxon>
        <taxon>Hexapoda</taxon>
        <taxon>Insecta</taxon>
        <taxon>Pterygota</taxon>
        <taxon>Neoptera</taxon>
        <taxon>Endopterygota</taxon>
        <taxon>Diptera</taxon>
        <taxon>Brachycera</taxon>
        <taxon>Muscomorpha</taxon>
        <taxon>Ephydroidea</taxon>
        <taxon>Drosophilidae</taxon>
        <taxon>Drosophila</taxon>
        <taxon>Sophophora</taxon>
    </lineage>
</organism>
<keyword id="KW-0963">Cytoplasm</keyword>
<keyword id="KW-1185">Reference proteome</keyword>
<keyword id="KW-0694">RNA-binding</keyword>
<keyword id="KW-0808">Transferase</keyword>
<keyword id="KW-0819">tRNA processing</keyword>
<keyword id="KW-0820">tRNA-binding</keyword>
<feature type="chain" id="PRO_0000368250" description="Cytoplasmic tRNA 2-thiolation protein 1">
    <location>
        <begin position="1"/>
        <end position="343"/>
    </location>
</feature>
<evidence type="ECO:0000255" key="1">
    <source>
        <dbReference type="HAMAP-Rule" id="MF_03053"/>
    </source>
</evidence>
<dbReference type="EC" id="2.7.7.-" evidence="1"/>
<dbReference type="EMBL" id="CM000071">
    <property type="protein sequence ID" value="EAL25692.2"/>
    <property type="molecule type" value="Genomic_DNA"/>
</dbReference>
<dbReference type="SMR" id="Q28ZC1"/>
<dbReference type="FunCoup" id="Q28ZC1">
    <property type="interactions" value="445"/>
</dbReference>
<dbReference type="STRING" id="46245.Q28ZC1"/>
<dbReference type="EnsemblMetazoa" id="FBtr0277986">
    <property type="protein sequence ID" value="FBpp0276424"/>
    <property type="gene ID" value="FBgn0080797"/>
</dbReference>
<dbReference type="KEGG" id="dpo:4804577"/>
<dbReference type="CTD" id="90353"/>
<dbReference type="eggNOG" id="KOG2840">
    <property type="taxonomic scope" value="Eukaryota"/>
</dbReference>
<dbReference type="HOGENOM" id="CLU_026481_1_2_1"/>
<dbReference type="InParanoid" id="Q28ZC1"/>
<dbReference type="OMA" id="KPVRGIC"/>
<dbReference type="UniPathway" id="UPA00988"/>
<dbReference type="Proteomes" id="UP000001819">
    <property type="component" value="Chromosome 3"/>
</dbReference>
<dbReference type="Bgee" id="FBgn0080797">
    <property type="expression patterns" value="Expressed in female reproductive system and 2 other cell types or tissues"/>
</dbReference>
<dbReference type="GO" id="GO:0005829">
    <property type="term" value="C:cytosol"/>
    <property type="evidence" value="ECO:0000250"/>
    <property type="project" value="UniProtKB"/>
</dbReference>
<dbReference type="GO" id="GO:0002144">
    <property type="term" value="C:cytosolic tRNA wobble base thiouridylase complex"/>
    <property type="evidence" value="ECO:0007669"/>
    <property type="project" value="TreeGrafter"/>
</dbReference>
<dbReference type="GO" id="GO:0005739">
    <property type="term" value="C:mitochondrion"/>
    <property type="evidence" value="ECO:0007669"/>
    <property type="project" value="TreeGrafter"/>
</dbReference>
<dbReference type="GO" id="GO:0016779">
    <property type="term" value="F:nucleotidyltransferase activity"/>
    <property type="evidence" value="ECO:0007669"/>
    <property type="project" value="UniProtKB-UniRule"/>
</dbReference>
<dbReference type="GO" id="GO:0000049">
    <property type="term" value="F:tRNA binding"/>
    <property type="evidence" value="ECO:0000250"/>
    <property type="project" value="UniProtKB"/>
</dbReference>
<dbReference type="GO" id="GO:0032447">
    <property type="term" value="P:protein urmylation"/>
    <property type="evidence" value="ECO:0007669"/>
    <property type="project" value="UniProtKB-UniRule"/>
</dbReference>
<dbReference type="GO" id="GO:0034227">
    <property type="term" value="P:tRNA thio-modification"/>
    <property type="evidence" value="ECO:0000250"/>
    <property type="project" value="UniProtKB"/>
</dbReference>
<dbReference type="GO" id="GO:0002143">
    <property type="term" value="P:tRNA wobble position uridine thiolation"/>
    <property type="evidence" value="ECO:0007669"/>
    <property type="project" value="TreeGrafter"/>
</dbReference>
<dbReference type="GO" id="GO:0002098">
    <property type="term" value="P:tRNA wobble uridine modification"/>
    <property type="evidence" value="ECO:0000250"/>
    <property type="project" value="UniProtKB"/>
</dbReference>
<dbReference type="CDD" id="cd01713">
    <property type="entry name" value="CTU1-like"/>
    <property type="match status" value="1"/>
</dbReference>
<dbReference type="FunFam" id="3.40.50.620:FF:000054">
    <property type="entry name" value="Cytoplasmic tRNA 2-thiolation protein 1"/>
    <property type="match status" value="1"/>
</dbReference>
<dbReference type="Gene3D" id="3.40.50.620">
    <property type="entry name" value="HUPs"/>
    <property type="match status" value="1"/>
</dbReference>
<dbReference type="HAMAP" id="MF_03053">
    <property type="entry name" value="CTU1"/>
    <property type="match status" value="1"/>
</dbReference>
<dbReference type="InterPro" id="IPR056369">
    <property type="entry name" value="CTU1-like_ATP-bd"/>
</dbReference>
<dbReference type="InterPro" id="IPR032442">
    <property type="entry name" value="CTU1_C"/>
</dbReference>
<dbReference type="InterPro" id="IPR000541">
    <property type="entry name" value="Ncs6/Tuc1/Ctu1"/>
</dbReference>
<dbReference type="InterPro" id="IPR014729">
    <property type="entry name" value="Rossmann-like_a/b/a_fold"/>
</dbReference>
<dbReference type="InterPro" id="IPR011063">
    <property type="entry name" value="TilS/TtcA_N"/>
</dbReference>
<dbReference type="InterPro" id="IPR035107">
    <property type="entry name" value="tRNA_thiolation_TtcA_Ctu1"/>
</dbReference>
<dbReference type="InterPro" id="IPR020554">
    <property type="entry name" value="UPF0021_CS"/>
</dbReference>
<dbReference type="NCBIfam" id="TIGR00269">
    <property type="entry name" value="TIGR00269 family protein"/>
    <property type="match status" value="1"/>
</dbReference>
<dbReference type="PANTHER" id="PTHR11807">
    <property type="entry name" value="ATPASES OF THE PP SUPERFAMILY-RELATED"/>
    <property type="match status" value="1"/>
</dbReference>
<dbReference type="PANTHER" id="PTHR11807:SF12">
    <property type="entry name" value="CYTOPLASMIC TRNA 2-THIOLATION PROTEIN 1"/>
    <property type="match status" value="1"/>
</dbReference>
<dbReference type="Pfam" id="PF01171">
    <property type="entry name" value="ATP_bind_3"/>
    <property type="match status" value="1"/>
</dbReference>
<dbReference type="Pfam" id="PF16503">
    <property type="entry name" value="zn-ribbon_14"/>
    <property type="match status" value="1"/>
</dbReference>
<dbReference type="PIRSF" id="PIRSF004976">
    <property type="entry name" value="ATPase_YdaO"/>
    <property type="match status" value="1"/>
</dbReference>
<dbReference type="SUPFAM" id="SSF52402">
    <property type="entry name" value="Adenine nucleotide alpha hydrolases-like"/>
    <property type="match status" value="1"/>
</dbReference>
<dbReference type="PROSITE" id="PS01263">
    <property type="entry name" value="UPF0021"/>
    <property type="match status" value="1"/>
</dbReference>
<sequence>MPINCKAKCGKAAALKRPKTGDALCKECFFAAFEAEIHHTITSSKLFRRGEKVAVAASGGKDSTVLAHVMKLLNERHDYGLELVLLSIDEGITGYRDDSLETVKQNRDDYKMPLKILSYEELYGWTMDRIVSQIGRSNNCTFCGVFRRQALDRGAKLLCVDSIATGHNADDIAETVLMNVLRGDTARLRRCTDIRTGGGEDSIPRVKPLKYSYEKEIVMYAHYKKLVYFSTECVFAPNAYRGHARAFLKDLEKVRPSVIMDIIYSGEQLRFKDTAKNPVRGTCNRCGFISSQQPCKACVLLEGLNRGLPKLGIGKKSKGDRMIAKQDQELALRERANLVKNDF</sequence>
<gene>
    <name type="ORF">GA20807</name>
</gene>
<protein>
    <recommendedName>
        <fullName evidence="1">Cytoplasmic tRNA 2-thiolation protein 1</fullName>
        <ecNumber evidence="1">2.7.7.-</ecNumber>
    </recommendedName>
    <alternativeName>
        <fullName evidence="1">Cytoplasmic tRNA adenylyltransferase 1</fullName>
    </alternativeName>
</protein>
<comment type="function">
    <text evidence="1">Plays a central role in 2-thiolation of mcm(5)S(2)U at tRNA wobble positions of tRNA(Lys), tRNA(Glu) and tRNA(Gln). Directly binds tRNAs and probably acts by catalyzing adenylation of tRNAs, an intermediate required for 2-thiolation. It is unclear whether it acts as a sulfurtransferase that transfers sulfur from thiocarboxylated URM1 onto the uridine of tRNAs at wobble position.</text>
</comment>
<comment type="pathway">
    <text evidence="1">tRNA modification; 5-methoxycarbonylmethyl-2-thiouridine-tRNA biosynthesis.</text>
</comment>
<comment type="subcellular location">
    <subcellularLocation>
        <location evidence="1">Cytoplasm</location>
    </subcellularLocation>
</comment>
<comment type="similarity">
    <text evidence="1">Belongs to the TtcA family. CTU1/NCS6/ATPBD3 subfamily.</text>
</comment>
<name>CTU1_DROPS</name>